<comment type="function">
    <text evidence="1">Bifunctional enzyme that catalyzes two sequential steps of tryptophan biosynthetic pathway. The first reaction is catalyzed by the isomerase, coded by the TrpF domain; the second reaction is catalyzed by the synthase, coded by the TrpC domain (By similarity).</text>
</comment>
<comment type="catalytic activity">
    <reaction>
        <text>N-(5-phospho-beta-D-ribosyl)anthranilate = 1-(2-carboxyphenylamino)-1-deoxy-D-ribulose 5-phosphate</text>
        <dbReference type="Rhea" id="RHEA:21540"/>
        <dbReference type="ChEBI" id="CHEBI:18277"/>
        <dbReference type="ChEBI" id="CHEBI:58613"/>
        <dbReference type="EC" id="5.3.1.24"/>
    </reaction>
</comment>
<comment type="catalytic activity">
    <reaction>
        <text>1-(2-carboxyphenylamino)-1-deoxy-D-ribulose 5-phosphate + H(+) = (1S,2R)-1-C-(indol-3-yl)glycerol 3-phosphate + CO2 + H2O</text>
        <dbReference type="Rhea" id="RHEA:23476"/>
        <dbReference type="ChEBI" id="CHEBI:15377"/>
        <dbReference type="ChEBI" id="CHEBI:15378"/>
        <dbReference type="ChEBI" id="CHEBI:16526"/>
        <dbReference type="ChEBI" id="CHEBI:58613"/>
        <dbReference type="ChEBI" id="CHEBI:58866"/>
        <dbReference type="EC" id="4.1.1.48"/>
    </reaction>
</comment>
<comment type="pathway">
    <text>Amino-acid biosynthesis; L-tryptophan biosynthesis; L-tryptophan from chorismate: step 3/5.</text>
</comment>
<comment type="pathway">
    <text>Amino-acid biosynthesis; L-tryptophan biosynthesis; L-tryptophan from chorismate: step 4/5.</text>
</comment>
<comment type="subunit">
    <text>Monomer.</text>
</comment>
<comment type="similarity">
    <text evidence="2">In the N-terminal section; belongs to the TrpC family.</text>
</comment>
<comment type="similarity">
    <text evidence="2">In the C-terminal section; belongs to the TrpF family.</text>
</comment>
<accession>P06560</accession>
<feature type="chain" id="PRO_0000154276" description="Tryptophan biosynthesis protein TrpCF">
    <location>
        <begin position="1"/>
        <end position="474"/>
    </location>
</feature>
<feature type="region of interest" description="Indole-3-glycerol phosphate synthase">
    <location>
        <begin position="1"/>
        <end position="262"/>
    </location>
</feature>
<feature type="region of interest" description="N-(5'-phosphoribosyl)anthranilate isomerase">
    <location>
        <begin position="263"/>
        <end position="474"/>
    </location>
</feature>
<feature type="sequence conflict" description="In Ref. 1; CAA28626." evidence="2" ref="1">
    <original>SG</original>
    <variation>AA</variation>
    <location>
        <begin position="88"/>
        <end position="89"/>
    </location>
</feature>
<feature type="sequence conflict" description="In Ref. 1; CAA28626." evidence="2" ref="1">
    <original>A</original>
    <variation>G</variation>
    <location>
        <position position="110"/>
    </location>
</feature>
<feature type="sequence conflict" description="In Ref. 1; CAA28626." evidence="2" ref="1">
    <original>HA</original>
    <variation>RP</variation>
    <location>
        <begin position="130"/>
        <end position="131"/>
    </location>
</feature>
<feature type="sequence conflict" description="In Ref. 1; CAA28626." evidence="2" ref="1">
    <original>A</original>
    <variation>D</variation>
    <location>
        <position position="153"/>
    </location>
</feature>
<feature type="sequence conflict" description="In Ref. 1; CAA28626." evidence="2" ref="1">
    <original>L</original>
    <variation>S</variation>
    <location>
        <position position="302"/>
    </location>
</feature>
<feature type="sequence conflict" description="In Ref. 1; CAA28626." evidence="2" ref="1">
    <original>D</original>
    <variation>G</variation>
    <location>
        <position position="343"/>
    </location>
</feature>
<feature type="sequence conflict" description="In Ref. 1; CAA28626." evidence="2" ref="1">
    <location>
        <begin position="381"/>
        <end position="383"/>
    </location>
</feature>
<feature type="sequence conflict" description="In Ref. 1; CAA28626." evidence="2" ref="1">
    <original>AGAKDAGALLKIFATISTFHY</original>
    <variation>GWGERCRRAAENFRDHLHIPLLKV</variation>
    <location>
        <begin position="454"/>
        <end position="474"/>
    </location>
</feature>
<feature type="helix" evidence="3">
    <location>
        <begin position="8"/>
        <end position="18"/>
    </location>
</feature>
<feature type="helix" evidence="3">
    <location>
        <begin position="21"/>
        <end position="27"/>
    </location>
</feature>
<feature type="turn" evidence="3">
    <location>
        <begin position="28"/>
        <end position="30"/>
    </location>
</feature>
<feature type="helix" evidence="3">
    <location>
        <begin position="33"/>
        <end position="35"/>
    </location>
</feature>
<feature type="helix" evidence="3">
    <location>
        <begin position="43"/>
        <end position="48"/>
    </location>
</feature>
<feature type="strand" evidence="3">
    <location>
        <begin position="55"/>
        <end position="60"/>
    </location>
</feature>
<feature type="strand" evidence="4">
    <location>
        <begin position="62"/>
        <end position="64"/>
    </location>
</feature>
<feature type="turn" evidence="4">
    <location>
        <begin position="65"/>
        <end position="67"/>
    </location>
</feature>
<feature type="strand" evidence="4">
    <location>
        <begin position="68"/>
        <end position="70"/>
    </location>
</feature>
<feature type="helix" evidence="3">
    <location>
        <begin position="76"/>
        <end position="83"/>
    </location>
</feature>
<feature type="turn" evidence="3">
    <location>
        <begin position="84"/>
        <end position="86"/>
    </location>
</feature>
<feature type="strand" evidence="3">
    <location>
        <begin position="88"/>
        <end position="93"/>
    </location>
</feature>
<feature type="turn" evidence="3">
    <location>
        <begin position="97"/>
        <end position="99"/>
    </location>
</feature>
<feature type="helix" evidence="3">
    <location>
        <begin position="103"/>
        <end position="112"/>
    </location>
</feature>
<feature type="strand" evidence="3">
    <location>
        <begin position="117"/>
        <end position="121"/>
    </location>
</feature>
<feature type="helix" evidence="3">
    <location>
        <begin position="126"/>
        <end position="134"/>
    </location>
</feature>
<feature type="strand" evidence="3">
    <location>
        <begin position="138"/>
        <end position="143"/>
    </location>
</feature>
<feature type="turn" evidence="3">
    <location>
        <begin position="144"/>
        <end position="146"/>
    </location>
</feature>
<feature type="helix" evidence="3">
    <location>
        <begin position="149"/>
        <end position="161"/>
    </location>
</feature>
<feature type="strand" evidence="3">
    <location>
        <begin position="165"/>
        <end position="169"/>
    </location>
</feature>
<feature type="helix" evidence="3">
    <location>
        <begin position="173"/>
        <end position="181"/>
    </location>
</feature>
<feature type="strand" evidence="3">
    <location>
        <begin position="185"/>
        <end position="192"/>
    </location>
</feature>
<feature type="turn" evidence="3">
    <location>
        <begin position="194"/>
        <end position="196"/>
    </location>
</feature>
<feature type="helix" evidence="3">
    <location>
        <begin position="202"/>
        <end position="208"/>
    </location>
</feature>
<feature type="strand" evidence="3">
    <location>
        <begin position="215"/>
        <end position="221"/>
    </location>
</feature>
<feature type="helix" evidence="3">
    <location>
        <begin position="226"/>
        <end position="232"/>
    </location>
</feature>
<feature type="turn" evidence="3">
    <location>
        <begin position="233"/>
        <end position="235"/>
    </location>
</feature>
<feature type="strand" evidence="3">
    <location>
        <begin position="237"/>
        <end position="241"/>
    </location>
</feature>
<feature type="helix" evidence="3">
    <location>
        <begin position="243"/>
        <end position="246"/>
    </location>
</feature>
<feature type="helix" evidence="3">
    <location>
        <begin position="251"/>
        <end position="259"/>
    </location>
</feature>
<feature type="helix" evidence="3">
    <location>
        <begin position="271"/>
        <end position="280"/>
    </location>
</feature>
<feature type="strand" evidence="3">
    <location>
        <begin position="283"/>
        <end position="288"/>
    </location>
</feature>
<feature type="strand" evidence="3">
    <location>
        <begin position="291"/>
        <end position="293"/>
    </location>
</feature>
<feature type="helix" evidence="3">
    <location>
        <begin position="299"/>
        <end position="308"/>
    </location>
</feature>
<feature type="strand" evidence="3">
    <location>
        <begin position="312"/>
        <end position="318"/>
    </location>
</feature>
<feature type="helix" evidence="3">
    <location>
        <begin position="324"/>
        <end position="327"/>
    </location>
</feature>
<feature type="strand" evidence="3">
    <location>
        <begin position="332"/>
        <end position="337"/>
    </location>
</feature>
<feature type="helix" evidence="3">
    <location>
        <begin position="345"/>
        <end position="359"/>
    </location>
</feature>
<feature type="strand" evidence="3">
    <location>
        <begin position="363"/>
        <end position="370"/>
    </location>
</feature>
<feature type="helix" evidence="3">
    <location>
        <begin position="376"/>
        <end position="383"/>
    </location>
</feature>
<feature type="turn" evidence="3">
    <location>
        <begin position="384"/>
        <end position="386"/>
    </location>
</feature>
<feature type="strand" evidence="3">
    <location>
        <begin position="388"/>
        <end position="393"/>
    </location>
</feature>
<feature type="helix" evidence="3">
    <location>
        <begin position="397"/>
        <end position="399"/>
    </location>
</feature>
<feature type="helix" evidence="3">
    <location>
        <begin position="405"/>
        <end position="407"/>
    </location>
</feature>
<feature type="helix" evidence="3">
    <location>
        <begin position="410"/>
        <end position="414"/>
    </location>
</feature>
<feature type="strand" evidence="3">
    <location>
        <begin position="416"/>
        <end position="421"/>
    </location>
</feature>
<feature type="turn" evidence="3">
    <location>
        <begin position="424"/>
        <end position="426"/>
    </location>
</feature>
<feature type="helix" evidence="3">
    <location>
        <begin position="427"/>
        <end position="432"/>
    </location>
</feature>
<feature type="strand" evidence="3">
    <location>
        <begin position="436"/>
        <end position="441"/>
    </location>
</feature>
<feature type="helix" evidence="3">
    <location>
        <begin position="442"/>
        <end position="444"/>
    </location>
</feature>
<feature type="helix" evidence="3">
    <location>
        <begin position="448"/>
        <end position="453"/>
    </location>
</feature>
<feature type="helix" evidence="3">
    <location>
        <begin position="459"/>
        <end position="471"/>
    </location>
</feature>
<dbReference type="EC" id="4.1.1.48"/>
<dbReference type="EC" id="5.3.1.24"/>
<dbReference type="EMBL" id="X04960">
    <property type="protein sequence ID" value="CAA28626.1"/>
    <property type="molecule type" value="Genomic_DNA"/>
</dbReference>
<dbReference type="EMBL" id="BA000036">
    <property type="protein sequence ID" value="BAC00427.1"/>
    <property type="molecule type" value="Genomic_DNA"/>
</dbReference>
<dbReference type="EMBL" id="BX927157">
    <property type="protein sequence ID" value="CAF18973.1"/>
    <property type="molecule type" value="Genomic_DNA"/>
</dbReference>
<dbReference type="PIR" id="E24723">
    <property type="entry name" value="E24723"/>
</dbReference>
<dbReference type="RefSeq" id="NP_602226.2">
    <property type="nucleotide sequence ID" value="NC_003450.3"/>
</dbReference>
<dbReference type="RefSeq" id="WP_011015582.1">
    <property type="nucleotide sequence ID" value="NC_006958.1"/>
</dbReference>
<dbReference type="PDB" id="7ETX">
    <property type="method" value="X-ray"/>
    <property type="resolution" value="2.10 A"/>
    <property type="chains" value="A=1-474"/>
</dbReference>
<dbReference type="PDB" id="7ETY">
    <property type="method" value="X-ray"/>
    <property type="resolution" value="2.21 A"/>
    <property type="chains" value="A/B=1-474"/>
</dbReference>
<dbReference type="PDBsum" id="7ETX"/>
<dbReference type="PDBsum" id="7ETY"/>
<dbReference type="SMR" id="P06560"/>
<dbReference type="STRING" id="196627.cg3362"/>
<dbReference type="GeneID" id="1020975"/>
<dbReference type="KEGG" id="cgb:cg3362"/>
<dbReference type="KEGG" id="cgl:Cgl3033"/>
<dbReference type="PATRIC" id="fig|196627.13.peg.2967"/>
<dbReference type="eggNOG" id="COG0134">
    <property type="taxonomic scope" value="Bacteria"/>
</dbReference>
<dbReference type="eggNOG" id="COG0135">
    <property type="taxonomic scope" value="Bacteria"/>
</dbReference>
<dbReference type="HOGENOM" id="CLU_007713_1_1_11"/>
<dbReference type="OrthoDB" id="9766131at2"/>
<dbReference type="BioCyc" id="CORYNE:G18NG-12654-MONOMER"/>
<dbReference type="UniPathway" id="UPA00035">
    <property type="reaction ID" value="UER00042"/>
</dbReference>
<dbReference type="UniPathway" id="UPA00035">
    <property type="reaction ID" value="UER00043"/>
</dbReference>
<dbReference type="Proteomes" id="UP000000582">
    <property type="component" value="Chromosome"/>
</dbReference>
<dbReference type="Proteomes" id="UP000001009">
    <property type="component" value="Chromosome"/>
</dbReference>
<dbReference type="GO" id="GO:0004425">
    <property type="term" value="F:indole-3-glycerol-phosphate synthase activity"/>
    <property type="evidence" value="ECO:0007669"/>
    <property type="project" value="UniProtKB-EC"/>
</dbReference>
<dbReference type="GO" id="GO:0004640">
    <property type="term" value="F:phosphoribosylanthranilate isomerase activity"/>
    <property type="evidence" value="ECO:0007669"/>
    <property type="project" value="UniProtKB-UniRule"/>
</dbReference>
<dbReference type="GO" id="GO:0000162">
    <property type="term" value="P:L-tryptophan biosynthetic process"/>
    <property type="evidence" value="ECO:0007669"/>
    <property type="project" value="UniProtKB-UniRule"/>
</dbReference>
<dbReference type="CDD" id="cd00331">
    <property type="entry name" value="IGPS"/>
    <property type="match status" value="1"/>
</dbReference>
<dbReference type="CDD" id="cd00405">
    <property type="entry name" value="PRAI"/>
    <property type="match status" value="1"/>
</dbReference>
<dbReference type="Gene3D" id="3.20.20.70">
    <property type="entry name" value="Aldolase class I"/>
    <property type="match status" value="2"/>
</dbReference>
<dbReference type="HAMAP" id="MF_00135">
    <property type="entry name" value="PRAI"/>
    <property type="match status" value="1"/>
</dbReference>
<dbReference type="InterPro" id="IPR013785">
    <property type="entry name" value="Aldolase_TIM"/>
</dbReference>
<dbReference type="InterPro" id="IPR045186">
    <property type="entry name" value="Indole-3-glycerol_P_synth"/>
</dbReference>
<dbReference type="InterPro" id="IPR013798">
    <property type="entry name" value="Indole-3-glycerol_P_synth_dom"/>
</dbReference>
<dbReference type="InterPro" id="IPR001468">
    <property type="entry name" value="Indole-3-GlycerolPSynthase_CS"/>
</dbReference>
<dbReference type="InterPro" id="IPR001240">
    <property type="entry name" value="PRAI_dom"/>
</dbReference>
<dbReference type="InterPro" id="IPR011060">
    <property type="entry name" value="RibuloseP-bd_barrel"/>
</dbReference>
<dbReference type="NCBIfam" id="NF006945">
    <property type="entry name" value="PRK09427.1"/>
    <property type="match status" value="1"/>
</dbReference>
<dbReference type="PANTHER" id="PTHR22854:SF2">
    <property type="entry name" value="INDOLE-3-GLYCEROL-PHOSPHATE SYNTHASE"/>
    <property type="match status" value="1"/>
</dbReference>
<dbReference type="PANTHER" id="PTHR22854">
    <property type="entry name" value="TRYPTOPHAN BIOSYNTHESIS PROTEIN"/>
    <property type="match status" value="1"/>
</dbReference>
<dbReference type="Pfam" id="PF00218">
    <property type="entry name" value="IGPS"/>
    <property type="match status" value="1"/>
</dbReference>
<dbReference type="Pfam" id="PF00697">
    <property type="entry name" value="PRAI"/>
    <property type="match status" value="1"/>
</dbReference>
<dbReference type="SUPFAM" id="SSF51366">
    <property type="entry name" value="Ribulose-phoshate binding barrel"/>
    <property type="match status" value="2"/>
</dbReference>
<dbReference type="PROSITE" id="PS00614">
    <property type="entry name" value="IGPS"/>
    <property type="match status" value="1"/>
</dbReference>
<reference key="1">
    <citation type="journal article" date="1986" name="Nucleic Acids Res.">
        <title>Complete nucleotide and deduced amino acid sequences of the Brevibacterium lactofermentum tryptophan operon.</title>
        <authorList>
            <person name="Matsui K."/>
            <person name="Sano K."/>
            <person name="Ohtsubo E."/>
        </authorList>
    </citation>
    <scope>NUCLEOTIDE SEQUENCE [GENOMIC DNA]</scope>
</reference>
<reference key="2">
    <citation type="journal article" date="2003" name="Appl. Microbiol. Biotechnol.">
        <title>The Corynebacterium glutamicum genome: features and impacts on biotechnological processes.</title>
        <authorList>
            <person name="Ikeda M."/>
            <person name="Nakagawa S."/>
        </authorList>
    </citation>
    <scope>NUCLEOTIDE SEQUENCE [LARGE SCALE GENOMIC DNA]</scope>
    <source>
        <strain>ATCC 13032 / DSM 20300 / JCM 1318 / BCRC 11384 / CCUG 27702 / LMG 3730 / NBRC 12168 / NCIMB 10025 / NRRL B-2784 / 534</strain>
    </source>
</reference>
<reference key="3">
    <citation type="journal article" date="2003" name="J. Biotechnol.">
        <title>The complete Corynebacterium glutamicum ATCC 13032 genome sequence and its impact on the production of L-aspartate-derived amino acids and vitamins.</title>
        <authorList>
            <person name="Kalinowski J."/>
            <person name="Bathe B."/>
            <person name="Bartels D."/>
            <person name="Bischoff N."/>
            <person name="Bott M."/>
            <person name="Burkovski A."/>
            <person name="Dusch N."/>
            <person name="Eggeling L."/>
            <person name="Eikmanns B.J."/>
            <person name="Gaigalat L."/>
            <person name="Goesmann A."/>
            <person name="Hartmann M."/>
            <person name="Huthmacher K."/>
            <person name="Kraemer R."/>
            <person name="Linke B."/>
            <person name="McHardy A.C."/>
            <person name="Meyer F."/>
            <person name="Moeckel B."/>
            <person name="Pfefferle W."/>
            <person name="Puehler A."/>
            <person name="Rey D.A."/>
            <person name="Rueckert C."/>
            <person name="Rupp O."/>
            <person name="Sahm H."/>
            <person name="Wendisch V.F."/>
            <person name="Wiegraebe I."/>
            <person name="Tauch A."/>
        </authorList>
    </citation>
    <scope>NUCLEOTIDE SEQUENCE [LARGE SCALE GENOMIC DNA]</scope>
    <source>
        <strain>ATCC 13032 / DSM 20300 / JCM 1318 / BCRC 11384 / CCUG 27702 / LMG 3730 / NBRC 12168 / NCIMB 10025 / NRRL B-2784 / 534</strain>
    </source>
</reference>
<sequence length="474" mass="50477">MTSNNLPTVLESIVEGRRGHLEEIRARIAHVDVDALPKSTRSLFDSLNQGRGGARFIMECKSASPSLGMIREHYQPGEIARVYSRYASGISVLCEPDRFGGDYDHLATVAATSHLPVLCKDFIIDPVQVHAARYFGADAILLMLSVLDDEEYAALAAEAARFDLDILTEVIDEEEVARAIKLGAKIFGVNHRNLHDLSIDLDRSRRLSKLIPADAVLVSESGVRDTETVRQLGGHSNAFLVGSQLTSQENVDLAARELVYGPNKVCGLTSPSAAQTARAAGAVYGGLIFEEASPRNVSRETLQKIIAAEPNLRYVAVSRRTSGYKDLLVDGIFAVQIHAPLQDSVEAEKALIAAVREEVGPQVQVWRAISMSSPLGAEVAAAVEGDVDKLILDAHEGGSGEVFDWATVPAAVKAKSLLAGGISPDNAAQALAVGCAGLDINSGVEYPAGAGTWAGAKDAGALLKIFATISTFHY</sequence>
<name>TRPC_CORGL</name>
<evidence type="ECO:0000250" key="1"/>
<evidence type="ECO:0000305" key="2"/>
<evidence type="ECO:0007829" key="3">
    <source>
        <dbReference type="PDB" id="7ETX"/>
    </source>
</evidence>
<evidence type="ECO:0007829" key="4">
    <source>
        <dbReference type="PDB" id="7ETY"/>
    </source>
</evidence>
<organism>
    <name type="scientific">Corynebacterium glutamicum (strain ATCC 13032 / DSM 20300 / JCM 1318 / BCRC 11384 / CCUG 27702 / LMG 3730 / NBRC 12168 / NCIMB 10025 / NRRL B-2784 / 534)</name>
    <dbReference type="NCBI Taxonomy" id="196627"/>
    <lineage>
        <taxon>Bacteria</taxon>
        <taxon>Bacillati</taxon>
        <taxon>Actinomycetota</taxon>
        <taxon>Actinomycetes</taxon>
        <taxon>Mycobacteriales</taxon>
        <taxon>Corynebacteriaceae</taxon>
        <taxon>Corynebacterium</taxon>
    </lineage>
</organism>
<proteinExistence type="evidence at protein level"/>
<gene>
    <name type="primary">trpC</name>
    <name type="synonym">trpCF</name>
    <name type="ordered locus">Cgl3033</name>
    <name type="ordered locus">cg3362</name>
</gene>
<protein>
    <recommendedName>
        <fullName>Tryptophan biosynthesis protein TrpCF</fullName>
    </recommendedName>
    <domain>
        <recommendedName>
            <fullName>Indole-3-glycerol phosphate synthase</fullName>
            <shortName>IGPS</shortName>
            <ecNumber>4.1.1.48</ecNumber>
        </recommendedName>
    </domain>
    <domain>
        <recommendedName>
            <fullName>N-(5'-phospho-ribosyl)anthranilate isomerase</fullName>
            <shortName>PRAI</shortName>
            <ecNumber>5.3.1.24</ecNumber>
        </recommendedName>
    </domain>
</protein>
<keyword id="KW-0002">3D-structure</keyword>
<keyword id="KW-0028">Amino-acid biosynthesis</keyword>
<keyword id="KW-0057">Aromatic amino acid biosynthesis</keyword>
<keyword id="KW-0210">Decarboxylase</keyword>
<keyword id="KW-0413">Isomerase</keyword>
<keyword id="KW-0456">Lyase</keyword>
<keyword id="KW-0511">Multifunctional enzyme</keyword>
<keyword id="KW-1185">Reference proteome</keyword>
<keyword id="KW-0822">Tryptophan biosynthesis</keyword>